<protein>
    <recommendedName>
        <fullName>Potassium channel toxin alpha-KTx 16.4</fullName>
    </recommendedName>
    <alternativeName>
        <fullName>Alpha-KTx MeuTx3B</fullName>
    </alternativeName>
    <alternativeName>
        <fullName>MeuKTx-4</fullName>
    </alternativeName>
</protein>
<comment type="function">
    <text evidence="2">Weak inhibitor of voltage-gated potassium channel hKv1.3/KCNA3.</text>
</comment>
<comment type="subcellular location">
    <subcellularLocation>
        <location evidence="3">Secreted</location>
    </subcellularLocation>
</comment>
<comment type="tissue specificity">
    <text evidence="3">Expressed by the venom gland.</text>
</comment>
<comment type="domain">
    <text>Has the structural arrangement of an alpha-helix connected to a beta-sheet by disulfide bonds (CSalpha/beta).</text>
</comment>
<comment type="mass spectrometry" mass="4066.8" method="MALDI" evidence="2"/>
<comment type="miscellaneous">
    <text evidence="5">Negative results: does not inhibit large conductance calcium-activated potassium channels (KCa1.1/KCNMA1).</text>
</comment>
<comment type="similarity">
    <text evidence="4">Belongs to the short scorpion toxin superfamily. Potassium channel inhibitor family. Alpha-KTx 16 subfamily.</text>
</comment>
<reference key="1">
    <citation type="journal article" date="2011" name="Comp. Biochem. Physiol.">
        <title>Molecular divergence of two orthologous scorpion toxins affecting potassium channels.</title>
        <authorList>
            <person name="Gao B."/>
            <person name="Peigneur S."/>
            <person name="Dalziel J."/>
            <person name="Tytgat J."/>
            <person name="Zhu S."/>
        </authorList>
    </citation>
    <scope>NUCLEOTIDE SEQUENCE [MRNA]</scope>
    <scope>PROTEIN SEQUENCE OF 23-59</scope>
    <scope>FUNCTION</scope>
    <scope>MASS SPECTROMETRY</scope>
    <source>
        <tissue>Venom</tissue>
        <tissue>Venom gland</tissue>
    </source>
</reference>
<reference key="2">
    <citation type="submission" date="2009-12" db="EMBL/GenBank/DDBJ databases">
        <title>Molecular characterization of a scorpion toxin specifically targeting Kv1.3 potassium channel from the Mesobuthus eupeus venom.</title>
        <authorList>
            <person name="Zhu S."/>
            <person name="Gao B."/>
        </authorList>
    </citation>
    <scope>NUCLEOTIDE SEQUENCE [MRNA] OF 22-59</scope>
</reference>
<reference key="3">
    <citation type="submission" date="2010-04" db="UniProtKB">
        <title>Molecular characterization of a new scorpion potassium channel toxin: 3.-UTR divergence between two orthologous toxins.</title>
        <authorList>
            <person name="Zhu S."/>
            <person name="Gao B."/>
        </authorList>
    </citation>
    <scope>PROTEIN SEQUENCE OF 23-59</scope>
    <scope>SUBCELLULAR LOCATION</scope>
    <scope>TISSUE SPECIFICITY</scope>
    <source>
        <tissue>Venom</tissue>
    </source>
</reference>
<organism>
    <name type="scientific">Mesobuthus eupeus</name>
    <name type="common">Lesser Asian scorpion</name>
    <name type="synonym">Buthus eupeus</name>
    <dbReference type="NCBI Taxonomy" id="34648"/>
    <lineage>
        <taxon>Eukaryota</taxon>
        <taxon>Metazoa</taxon>
        <taxon>Ecdysozoa</taxon>
        <taxon>Arthropoda</taxon>
        <taxon>Chelicerata</taxon>
        <taxon>Arachnida</taxon>
        <taxon>Scorpiones</taxon>
        <taxon>Buthida</taxon>
        <taxon>Buthoidea</taxon>
        <taxon>Buthidae</taxon>
        <taxon>Mesobuthus</taxon>
    </lineage>
</organism>
<proteinExistence type="evidence at protein level"/>
<evidence type="ECO:0000250" key="1"/>
<evidence type="ECO:0000269" key="2">
    <source>
    </source>
</evidence>
<evidence type="ECO:0000269" key="3">
    <source ref="3"/>
</evidence>
<evidence type="ECO:0000305" key="4"/>
<evidence type="ECO:0000305" key="5">
    <source>
    </source>
</evidence>
<feature type="signal peptide" evidence="2 3">
    <location>
        <begin position="1"/>
        <end position="22"/>
    </location>
</feature>
<feature type="peptide" id="PRO_0000394730" description="Potassium channel toxin alpha-KTx 16.4" evidence="2 3">
    <location>
        <begin position="23"/>
        <end position="59"/>
    </location>
</feature>
<feature type="site" description="Basic residue of the functional dyad" evidence="1">
    <location>
        <position position="50"/>
    </location>
</feature>
<feature type="site" description="Aromatic residue of the functional dyad" evidence="1">
    <location>
        <position position="59"/>
    </location>
</feature>
<feature type="disulfide bond" evidence="1">
    <location>
        <begin position="30"/>
        <end position="51"/>
    </location>
</feature>
<feature type="disulfide bond" evidence="1">
    <location>
        <begin position="36"/>
        <end position="56"/>
    </location>
</feature>
<feature type="disulfide bond" evidence="1">
    <location>
        <begin position="40"/>
        <end position="58"/>
    </location>
</feature>
<keyword id="KW-0903">Direct protein sequencing</keyword>
<keyword id="KW-1015">Disulfide bond</keyword>
<keyword id="KW-0872">Ion channel impairing toxin</keyword>
<keyword id="KW-0528">Neurotoxin</keyword>
<keyword id="KW-0632">Potassium channel impairing toxin</keyword>
<keyword id="KW-0964">Secreted</keyword>
<keyword id="KW-0732">Signal</keyword>
<keyword id="KW-0800">Toxin</keyword>
<keyword id="KW-1220">Voltage-gated potassium channel impairing toxin</keyword>
<accession>D3JXM1</accession>
<accession>F5CJW1</accession>
<dbReference type="EMBL" id="JF719812">
    <property type="protein sequence ID" value="AEC22868.1"/>
    <property type="molecule type" value="mRNA"/>
</dbReference>
<dbReference type="EMBL" id="GU327370">
    <property type="protein sequence ID" value="ADB82798.1"/>
    <property type="molecule type" value="mRNA"/>
</dbReference>
<dbReference type="SMR" id="D3JXM1"/>
<dbReference type="GO" id="GO:0005576">
    <property type="term" value="C:extracellular region"/>
    <property type="evidence" value="ECO:0007669"/>
    <property type="project" value="UniProtKB-SubCell"/>
</dbReference>
<dbReference type="GO" id="GO:0008200">
    <property type="term" value="F:ion channel inhibitor activity"/>
    <property type="evidence" value="ECO:0007669"/>
    <property type="project" value="InterPro"/>
</dbReference>
<dbReference type="GO" id="GO:0015459">
    <property type="term" value="F:potassium channel regulator activity"/>
    <property type="evidence" value="ECO:0007669"/>
    <property type="project" value="UniProtKB-KW"/>
</dbReference>
<dbReference type="GO" id="GO:0090729">
    <property type="term" value="F:toxin activity"/>
    <property type="evidence" value="ECO:0007669"/>
    <property type="project" value="UniProtKB-KW"/>
</dbReference>
<dbReference type="Gene3D" id="3.30.30.10">
    <property type="entry name" value="Knottin, scorpion toxin-like"/>
    <property type="match status" value="1"/>
</dbReference>
<dbReference type="InterPro" id="IPR036574">
    <property type="entry name" value="Scorpion_toxin-like_sf"/>
</dbReference>
<dbReference type="InterPro" id="IPR001947">
    <property type="entry name" value="Scorpion_toxinS_K_inh"/>
</dbReference>
<dbReference type="Pfam" id="PF00451">
    <property type="entry name" value="Toxin_2"/>
    <property type="match status" value="1"/>
</dbReference>
<dbReference type="PRINTS" id="PR00286">
    <property type="entry name" value="CHARYBDTOXIN"/>
</dbReference>
<dbReference type="SUPFAM" id="SSF57095">
    <property type="entry name" value="Scorpion toxin-like"/>
    <property type="match status" value="1"/>
</dbReference>
<dbReference type="PROSITE" id="PS01138">
    <property type="entry name" value="SCORP_SHORT_TOXIN"/>
    <property type="match status" value="1"/>
</dbReference>
<name>KA164_MESEU</name>
<sequence length="59" mass="6402">MKILSIVLIALIICSISICTEAFGLIDVKCSASRECWVACKKVTGSGQGKCQNNQCRCY</sequence>